<dbReference type="EC" id="2.5.1.6" evidence="1"/>
<dbReference type="EMBL" id="CR628336">
    <property type="protein sequence ID" value="CAH13156.1"/>
    <property type="molecule type" value="Genomic_DNA"/>
</dbReference>
<dbReference type="RefSeq" id="WP_011214269.1">
    <property type="nucleotide sequence ID" value="NC_006368.1"/>
</dbReference>
<dbReference type="SMR" id="Q5X3N0"/>
<dbReference type="KEGG" id="lpp:lpp2004"/>
<dbReference type="LegioList" id="lpp2004"/>
<dbReference type="HOGENOM" id="CLU_041802_1_1_6"/>
<dbReference type="UniPathway" id="UPA00315">
    <property type="reaction ID" value="UER00080"/>
</dbReference>
<dbReference type="GO" id="GO:0005737">
    <property type="term" value="C:cytoplasm"/>
    <property type="evidence" value="ECO:0007669"/>
    <property type="project" value="UniProtKB-SubCell"/>
</dbReference>
<dbReference type="GO" id="GO:0005524">
    <property type="term" value="F:ATP binding"/>
    <property type="evidence" value="ECO:0007669"/>
    <property type="project" value="UniProtKB-UniRule"/>
</dbReference>
<dbReference type="GO" id="GO:0000287">
    <property type="term" value="F:magnesium ion binding"/>
    <property type="evidence" value="ECO:0007669"/>
    <property type="project" value="UniProtKB-UniRule"/>
</dbReference>
<dbReference type="GO" id="GO:0004478">
    <property type="term" value="F:methionine adenosyltransferase activity"/>
    <property type="evidence" value="ECO:0007669"/>
    <property type="project" value="UniProtKB-UniRule"/>
</dbReference>
<dbReference type="GO" id="GO:0006730">
    <property type="term" value="P:one-carbon metabolic process"/>
    <property type="evidence" value="ECO:0007669"/>
    <property type="project" value="UniProtKB-KW"/>
</dbReference>
<dbReference type="GO" id="GO:0006556">
    <property type="term" value="P:S-adenosylmethionine biosynthetic process"/>
    <property type="evidence" value="ECO:0007669"/>
    <property type="project" value="UniProtKB-UniRule"/>
</dbReference>
<dbReference type="CDD" id="cd18079">
    <property type="entry name" value="S-AdoMet_synt"/>
    <property type="match status" value="1"/>
</dbReference>
<dbReference type="FunFam" id="3.30.300.10:FF:000001">
    <property type="entry name" value="S-adenosylmethionine synthase"/>
    <property type="match status" value="1"/>
</dbReference>
<dbReference type="FunFam" id="3.30.300.10:FF:000003">
    <property type="entry name" value="S-adenosylmethionine synthase"/>
    <property type="match status" value="1"/>
</dbReference>
<dbReference type="Gene3D" id="3.30.300.10">
    <property type="match status" value="3"/>
</dbReference>
<dbReference type="HAMAP" id="MF_00086">
    <property type="entry name" value="S_AdoMet_synth1"/>
    <property type="match status" value="1"/>
</dbReference>
<dbReference type="InterPro" id="IPR022631">
    <property type="entry name" value="ADOMET_SYNTHASE_CS"/>
</dbReference>
<dbReference type="InterPro" id="IPR022630">
    <property type="entry name" value="S-AdoMet_synt_C"/>
</dbReference>
<dbReference type="InterPro" id="IPR022629">
    <property type="entry name" value="S-AdoMet_synt_central"/>
</dbReference>
<dbReference type="InterPro" id="IPR022628">
    <property type="entry name" value="S-AdoMet_synt_N"/>
</dbReference>
<dbReference type="InterPro" id="IPR002133">
    <property type="entry name" value="S-AdoMet_synthetase"/>
</dbReference>
<dbReference type="InterPro" id="IPR022636">
    <property type="entry name" value="S-AdoMet_synthetase_sfam"/>
</dbReference>
<dbReference type="NCBIfam" id="TIGR01034">
    <property type="entry name" value="metK"/>
    <property type="match status" value="1"/>
</dbReference>
<dbReference type="PANTHER" id="PTHR11964">
    <property type="entry name" value="S-ADENOSYLMETHIONINE SYNTHETASE"/>
    <property type="match status" value="1"/>
</dbReference>
<dbReference type="Pfam" id="PF02773">
    <property type="entry name" value="S-AdoMet_synt_C"/>
    <property type="match status" value="1"/>
</dbReference>
<dbReference type="Pfam" id="PF02772">
    <property type="entry name" value="S-AdoMet_synt_M"/>
    <property type="match status" value="1"/>
</dbReference>
<dbReference type="Pfam" id="PF00438">
    <property type="entry name" value="S-AdoMet_synt_N"/>
    <property type="match status" value="1"/>
</dbReference>
<dbReference type="PIRSF" id="PIRSF000497">
    <property type="entry name" value="MAT"/>
    <property type="match status" value="1"/>
</dbReference>
<dbReference type="SUPFAM" id="SSF55973">
    <property type="entry name" value="S-adenosylmethionine synthetase"/>
    <property type="match status" value="3"/>
</dbReference>
<dbReference type="PROSITE" id="PS00376">
    <property type="entry name" value="ADOMET_SYNTHASE_1"/>
    <property type="match status" value="1"/>
</dbReference>
<dbReference type="PROSITE" id="PS00377">
    <property type="entry name" value="ADOMET_SYNTHASE_2"/>
    <property type="match status" value="1"/>
</dbReference>
<comment type="function">
    <text evidence="1">Catalyzes the formation of S-adenosylmethionine (AdoMet) from methionine and ATP. The overall synthetic reaction is composed of two sequential steps, AdoMet formation and the subsequent tripolyphosphate hydrolysis which occurs prior to release of AdoMet from the enzyme.</text>
</comment>
<comment type="catalytic activity">
    <reaction evidence="1">
        <text>L-methionine + ATP + H2O = S-adenosyl-L-methionine + phosphate + diphosphate</text>
        <dbReference type="Rhea" id="RHEA:21080"/>
        <dbReference type="ChEBI" id="CHEBI:15377"/>
        <dbReference type="ChEBI" id="CHEBI:30616"/>
        <dbReference type="ChEBI" id="CHEBI:33019"/>
        <dbReference type="ChEBI" id="CHEBI:43474"/>
        <dbReference type="ChEBI" id="CHEBI:57844"/>
        <dbReference type="ChEBI" id="CHEBI:59789"/>
        <dbReference type="EC" id="2.5.1.6"/>
    </reaction>
</comment>
<comment type="cofactor">
    <cofactor evidence="1">
        <name>Mg(2+)</name>
        <dbReference type="ChEBI" id="CHEBI:18420"/>
    </cofactor>
    <text evidence="1">Binds 2 divalent ions per subunit.</text>
</comment>
<comment type="cofactor">
    <cofactor evidence="1">
        <name>K(+)</name>
        <dbReference type="ChEBI" id="CHEBI:29103"/>
    </cofactor>
    <text evidence="1">Binds 1 potassium ion per subunit.</text>
</comment>
<comment type="pathway">
    <text evidence="1">Amino-acid biosynthesis; S-adenosyl-L-methionine biosynthesis; S-adenosyl-L-methionine from L-methionine: step 1/1.</text>
</comment>
<comment type="subunit">
    <text evidence="1">Homotetramer; dimer of dimers.</text>
</comment>
<comment type="subcellular location">
    <subcellularLocation>
        <location evidence="1">Cytoplasm</location>
    </subcellularLocation>
</comment>
<comment type="similarity">
    <text evidence="1">Belongs to the AdoMet synthase family.</text>
</comment>
<gene>
    <name evidence="1" type="primary">metK</name>
    <name type="ordered locus">lpp2004</name>
</gene>
<proteinExistence type="inferred from homology"/>
<keyword id="KW-0067">ATP-binding</keyword>
<keyword id="KW-0963">Cytoplasm</keyword>
<keyword id="KW-0460">Magnesium</keyword>
<keyword id="KW-0479">Metal-binding</keyword>
<keyword id="KW-0547">Nucleotide-binding</keyword>
<keyword id="KW-0554">One-carbon metabolism</keyword>
<keyword id="KW-0630">Potassium</keyword>
<keyword id="KW-0808">Transferase</keyword>
<protein>
    <recommendedName>
        <fullName evidence="1">S-adenosylmethionine synthase</fullName>
        <shortName evidence="1">AdoMet synthase</shortName>
        <ecNumber evidence="1">2.5.1.6</ecNumber>
    </recommendedName>
    <alternativeName>
        <fullName evidence="1">MAT</fullName>
    </alternativeName>
    <alternativeName>
        <fullName evidence="1">Methionine adenosyltransferase</fullName>
    </alternativeName>
</protein>
<accession>Q5X3N0</accession>
<organism>
    <name type="scientific">Legionella pneumophila (strain Paris)</name>
    <dbReference type="NCBI Taxonomy" id="297246"/>
    <lineage>
        <taxon>Bacteria</taxon>
        <taxon>Pseudomonadati</taxon>
        <taxon>Pseudomonadota</taxon>
        <taxon>Gammaproteobacteria</taxon>
        <taxon>Legionellales</taxon>
        <taxon>Legionellaceae</taxon>
        <taxon>Legionella</taxon>
    </lineage>
</organism>
<name>METK_LEGPA</name>
<sequence length="382" mass="42006">MNEVYVFTSESVSEGHPDKIADQISDAILDAILAQDPKARVACEVLVKTGMVLVGGEITTKAWVDVEEITRHVIKDIGYNSSQMGFDWESCAVLSAIGKQSPDIAQGVDNQQTKILGAGDQGLMFGYASRETDVFMPAPIAYAHRLMEKLAKARKSGQLPWLRPDAKCQLTLKYEQGMPVEVDTVVFSTQHSPDIEHKDLVEAIREEIIKSVLPAEWLNDKTRYFINPTGRFVIGGPLGDCGLTGRKIIVDTYGGMARHGGGCFSGKDPSKVDRSAAYAARHVAKNIVAAGLADKCELQISYAIGVAEPTSIFVDTFGTGRLKNSEIIDLIHTHFDLTPQGIIDQHDLLRPIYRQTATYGHYGRENFPWERLDKVAELSKAL</sequence>
<reference key="1">
    <citation type="journal article" date="2004" name="Nat. Genet.">
        <title>Evidence in the Legionella pneumophila genome for exploitation of host cell functions and high genome plasticity.</title>
        <authorList>
            <person name="Cazalet C."/>
            <person name="Rusniok C."/>
            <person name="Brueggemann H."/>
            <person name="Zidane N."/>
            <person name="Magnier A."/>
            <person name="Ma L."/>
            <person name="Tichit M."/>
            <person name="Jarraud S."/>
            <person name="Bouchier C."/>
            <person name="Vandenesch F."/>
            <person name="Kunst F."/>
            <person name="Etienne J."/>
            <person name="Glaser P."/>
            <person name="Buchrieser C."/>
        </authorList>
    </citation>
    <scope>NUCLEOTIDE SEQUENCE [LARGE SCALE GENOMIC DNA]</scope>
    <source>
        <strain>Paris</strain>
    </source>
</reference>
<feature type="chain" id="PRO_0000174537" description="S-adenosylmethionine synthase">
    <location>
        <begin position="1"/>
        <end position="382"/>
    </location>
</feature>
<feature type="region of interest" description="Flexible loop" evidence="1">
    <location>
        <begin position="100"/>
        <end position="110"/>
    </location>
</feature>
<feature type="binding site" description="in other chain" evidence="1">
    <location>
        <position position="16"/>
    </location>
    <ligand>
        <name>ATP</name>
        <dbReference type="ChEBI" id="CHEBI:30616"/>
        <note>ligand shared between two neighboring subunits</note>
    </ligand>
</feature>
<feature type="binding site" evidence="1">
    <location>
        <position position="18"/>
    </location>
    <ligand>
        <name>Mg(2+)</name>
        <dbReference type="ChEBI" id="CHEBI:18420"/>
    </ligand>
</feature>
<feature type="binding site" evidence="1">
    <location>
        <position position="44"/>
    </location>
    <ligand>
        <name>K(+)</name>
        <dbReference type="ChEBI" id="CHEBI:29103"/>
    </ligand>
</feature>
<feature type="binding site" description="in other chain" evidence="1">
    <location>
        <position position="57"/>
    </location>
    <ligand>
        <name>L-methionine</name>
        <dbReference type="ChEBI" id="CHEBI:57844"/>
        <note>ligand shared between two neighboring subunits</note>
    </ligand>
</feature>
<feature type="binding site" description="in other chain" evidence="1">
    <location>
        <position position="100"/>
    </location>
    <ligand>
        <name>L-methionine</name>
        <dbReference type="ChEBI" id="CHEBI:57844"/>
        <note>ligand shared between two neighboring subunits</note>
    </ligand>
</feature>
<feature type="binding site" description="in other chain" evidence="1">
    <location>
        <begin position="165"/>
        <end position="167"/>
    </location>
    <ligand>
        <name>ATP</name>
        <dbReference type="ChEBI" id="CHEBI:30616"/>
        <note>ligand shared between two neighboring subunits</note>
    </ligand>
</feature>
<feature type="binding site" description="in other chain" evidence="1">
    <location>
        <begin position="231"/>
        <end position="232"/>
    </location>
    <ligand>
        <name>ATP</name>
        <dbReference type="ChEBI" id="CHEBI:30616"/>
        <note>ligand shared between two neighboring subunits</note>
    </ligand>
</feature>
<feature type="binding site" evidence="1">
    <location>
        <position position="240"/>
    </location>
    <ligand>
        <name>ATP</name>
        <dbReference type="ChEBI" id="CHEBI:30616"/>
        <note>ligand shared between two neighboring subunits</note>
    </ligand>
</feature>
<feature type="binding site" evidence="1">
    <location>
        <position position="240"/>
    </location>
    <ligand>
        <name>L-methionine</name>
        <dbReference type="ChEBI" id="CHEBI:57844"/>
        <note>ligand shared between two neighboring subunits</note>
    </ligand>
</feature>
<feature type="binding site" description="in other chain" evidence="1">
    <location>
        <begin position="246"/>
        <end position="247"/>
    </location>
    <ligand>
        <name>ATP</name>
        <dbReference type="ChEBI" id="CHEBI:30616"/>
        <note>ligand shared between two neighboring subunits</note>
    </ligand>
</feature>
<feature type="binding site" evidence="1">
    <location>
        <position position="267"/>
    </location>
    <ligand>
        <name>ATP</name>
        <dbReference type="ChEBI" id="CHEBI:30616"/>
        <note>ligand shared between two neighboring subunits</note>
    </ligand>
</feature>
<feature type="binding site" description="in other chain" evidence="1">
    <location>
        <position position="271"/>
    </location>
    <ligand>
        <name>L-methionine</name>
        <dbReference type="ChEBI" id="CHEBI:57844"/>
        <note>ligand shared between two neighboring subunits</note>
    </ligand>
</feature>
<evidence type="ECO:0000255" key="1">
    <source>
        <dbReference type="HAMAP-Rule" id="MF_00086"/>
    </source>
</evidence>